<comment type="function">
    <text evidence="6 7 8">Proline-directed serine/threonine-protein kinase involved in a signal transduction pathway that is activated by changes in the osmolarity of the extracellular environment. Controls osmotic regulation of transcription of target genes. Also involved in the response to UV radiation, heat stress and oxidative stress. Mediates the sensitivity to fludioxonil, an agricultural fungicide.</text>
</comment>
<comment type="catalytic activity">
    <reaction evidence="2">
        <text>L-seryl-[protein] + ATP = O-phospho-L-seryl-[protein] + ADP + H(+)</text>
        <dbReference type="Rhea" id="RHEA:17989"/>
        <dbReference type="Rhea" id="RHEA-COMP:9863"/>
        <dbReference type="Rhea" id="RHEA-COMP:11604"/>
        <dbReference type="ChEBI" id="CHEBI:15378"/>
        <dbReference type="ChEBI" id="CHEBI:29999"/>
        <dbReference type="ChEBI" id="CHEBI:30616"/>
        <dbReference type="ChEBI" id="CHEBI:83421"/>
        <dbReference type="ChEBI" id="CHEBI:456216"/>
        <dbReference type="EC" id="2.7.11.24"/>
    </reaction>
    <physiologicalReaction direction="left-to-right" evidence="2">
        <dbReference type="Rhea" id="RHEA:17990"/>
    </physiologicalReaction>
</comment>
<comment type="catalytic activity">
    <reaction evidence="2">
        <text>L-threonyl-[protein] + ATP = O-phospho-L-threonyl-[protein] + ADP + H(+)</text>
        <dbReference type="Rhea" id="RHEA:46608"/>
        <dbReference type="Rhea" id="RHEA-COMP:11060"/>
        <dbReference type="Rhea" id="RHEA-COMP:11605"/>
        <dbReference type="ChEBI" id="CHEBI:15378"/>
        <dbReference type="ChEBI" id="CHEBI:30013"/>
        <dbReference type="ChEBI" id="CHEBI:30616"/>
        <dbReference type="ChEBI" id="CHEBI:61977"/>
        <dbReference type="ChEBI" id="CHEBI:456216"/>
        <dbReference type="EC" id="2.7.11.24"/>
    </reaction>
    <physiologicalReaction direction="left-to-right" evidence="2">
        <dbReference type="Rhea" id="RHEA:46609"/>
    </physiologicalReaction>
</comment>
<comment type="cofactor">
    <cofactor evidence="3">
        <name>Mg(2+)</name>
        <dbReference type="ChEBI" id="CHEBI:18420"/>
    </cofactor>
</comment>
<comment type="activity regulation">
    <text>Activated by dephosphorylation after osmotic stress or in presence of the fludioxonil fungicide.</text>
</comment>
<comment type="subcellular location">
    <subcellularLocation>
        <location evidence="6">Cytoplasm</location>
    </subcellularLocation>
    <subcellularLocation>
        <location evidence="6">Nucleus</location>
    </subcellularLocation>
    <text>Concentration into the nucleus in response to hyperosmotic conditions is transient and moderate.</text>
</comment>
<comment type="domain">
    <text>The TXY motif contains the threonine and tyrosine residues whose phosphorylation activates the MAP kinases.</text>
</comment>
<comment type="PTM">
    <text evidence="6 7 8">Contrary to what happens in most fungi, is constitutively phosphorylated during non-stress conditions and dephosphorylated after osmotic stress or in presence of the fludioxonil fungicide.</text>
</comment>
<comment type="similarity">
    <text evidence="4">Belongs to the protein kinase superfamily. Ser/Thr protein kinase family. MAP kinase subfamily. HOG1 sub-subfamily.</text>
</comment>
<dbReference type="EC" id="2.7.11.24" evidence="2"/>
<dbReference type="EMBL" id="AY775548">
    <property type="protein sequence ID" value="AAX08139.1"/>
    <property type="molecule type" value="Genomic_DNA"/>
</dbReference>
<dbReference type="EMBL" id="CP003830">
    <property type="protein sequence ID" value="AFR97728.1"/>
    <property type="molecule type" value="Genomic_DNA"/>
</dbReference>
<dbReference type="RefSeq" id="XP_012052578.1">
    <property type="nucleotide sequence ID" value="XM_012197188.1"/>
</dbReference>
<dbReference type="SMR" id="Q56R42"/>
<dbReference type="SwissPalm" id="Q56R42"/>
<dbReference type="EnsemblFungi" id="AAW42642">
    <property type="protein sequence ID" value="AAW42642"/>
    <property type="gene ID" value="CNC06590"/>
</dbReference>
<dbReference type="GeneID" id="23885222"/>
<dbReference type="KEGG" id="cng:CNAG_01523"/>
<dbReference type="VEuPathDB" id="FungiDB:CNAG_01523"/>
<dbReference type="HOGENOM" id="CLU_000288_181_1_1"/>
<dbReference type="OrthoDB" id="328at5206"/>
<dbReference type="PHI-base" id="PHI:497"/>
<dbReference type="Proteomes" id="UP000010091">
    <property type="component" value="Chromosome 11"/>
</dbReference>
<dbReference type="GO" id="GO:0005737">
    <property type="term" value="C:cytoplasm"/>
    <property type="evidence" value="ECO:0007669"/>
    <property type="project" value="UniProtKB-SubCell"/>
</dbReference>
<dbReference type="GO" id="GO:0005634">
    <property type="term" value="C:nucleus"/>
    <property type="evidence" value="ECO:0007669"/>
    <property type="project" value="UniProtKB-SubCell"/>
</dbReference>
<dbReference type="GO" id="GO:0005524">
    <property type="term" value="F:ATP binding"/>
    <property type="evidence" value="ECO:0007669"/>
    <property type="project" value="UniProtKB-KW"/>
</dbReference>
<dbReference type="GO" id="GO:0004707">
    <property type="term" value="F:MAP kinase activity"/>
    <property type="evidence" value="ECO:0007669"/>
    <property type="project" value="UniProtKB-EC"/>
</dbReference>
<dbReference type="GO" id="GO:0106310">
    <property type="term" value="F:protein serine kinase activity"/>
    <property type="evidence" value="ECO:0007669"/>
    <property type="project" value="RHEA"/>
</dbReference>
<dbReference type="GO" id="GO:0051403">
    <property type="term" value="P:stress-activated MAPK cascade"/>
    <property type="evidence" value="ECO:0007669"/>
    <property type="project" value="InterPro"/>
</dbReference>
<dbReference type="CDD" id="cd07856">
    <property type="entry name" value="STKc_Sty1_Hog1"/>
    <property type="match status" value="1"/>
</dbReference>
<dbReference type="FunFam" id="1.10.510.10:FF:000049">
    <property type="entry name" value="Mitogen-activated protein kinase"/>
    <property type="match status" value="1"/>
</dbReference>
<dbReference type="FunFam" id="3.30.200.20:FF:000050">
    <property type="entry name" value="Mitogen-activated protein kinase"/>
    <property type="match status" value="1"/>
</dbReference>
<dbReference type="Gene3D" id="3.30.200.20">
    <property type="entry name" value="Phosphorylase Kinase, domain 1"/>
    <property type="match status" value="1"/>
</dbReference>
<dbReference type="Gene3D" id="1.10.510.10">
    <property type="entry name" value="Transferase(Phosphotransferase) domain 1"/>
    <property type="match status" value="1"/>
</dbReference>
<dbReference type="InterPro" id="IPR011009">
    <property type="entry name" value="Kinase-like_dom_sf"/>
</dbReference>
<dbReference type="InterPro" id="IPR050117">
    <property type="entry name" value="MAP_kinase"/>
</dbReference>
<dbReference type="InterPro" id="IPR003527">
    <property type="entry name" value="MAP_kinase_CS"/>
</dbReference>
<dbReference type="InterPro" id="IPR008352">
    <property type="entry name" value="MAPK_p38-like"/>
</dbReference>
<dbReference type="InterPro" id="IPR038783">
    <property type="entry name" value="MAPK_Sty1/Hog1"/>
</dbReference>
<dbReference type="InterPro" id="IPR000719">
    <property type="entry name" value="Prot_kinase_dom"/>
</dbReference>
<dbReference type="InterPro" id="IPR017441">
    <property type="entry name" value="Protein_kinase_ATP_BS"/>
</dbReference>
<dbReference type="InterPro" id="IPR008271">
    <property type="entry name" value="Ser/Thr_kinase_AS"/>
</dbReference>
<dbReference type="PANTHER" id="PTHR24055">
    <property type="entry name" value="MITOGEN-ACTIVATED PROTEIN KINASE"/>
    <property type="match status" value="1"/>
</dbReference>
<dbReference type="Pfam" id="PF00069">
    <property type="entry name" value="Pkinase"/>
    <property type="match status" value="1"/>
</dbReference>
<dbReference type="PRINTS" id="PR01773">
    <property type="entry name" value="P38MAPKINASE"/>
</dbReference>
<dbReference type="SMART" id="SM00220">
    <property type="entry name" value="S_TKc"/>
    <property type="match status" value="1"/>
</dbReference>
<dbReference type="SUPFAM" id="SSF56112">
    <property type="entry name" value="Protein kinase-like (PK-like)"/>
    <property type="match status" value="1"/>
</dbReference>
<dbReference type="PROSITE" id="PS01351">
    <property type="entry name" value="MAPK"/>
    <property type="match status" value="1"/>
</dbReference>
<dbReference type="PROSITE" id="PS00107">
    <property type="entry name" value="PROTEIN_KINASE_ATP"/>
    <property type="match status" value="1"/>
</dbReference>
<dbReference type="PROSITE" id="PS50011">
    <property type="entry name" value="PROTEIN_KINASE_DOM"/>
    <property type="match status" value="1"/>
</dbReference>
<dbReference type="PROSITE" id="PS00108">
    <property type="entry name" value="PROTEIN_KINASE_ST"/>
    <property type="match status" value="1"/>
</dbReference>
<organism>
    <name type="scientific">Cryptococcus neoformans var. grubii serotype A (strain H99 / ATCC 208821 / CBS 10515 / FGSC 9487)</name>
    <name type="common">Filobasidiella neoformans var. grubii</name>
    <dbReference type="NCBI Taxonomy" id="235443"/>
    <lineage>
        <taxon>Eukaryota</taxon>
        <taxon>Fungi</taxon>
        <taxon>Dikarya</taxon>
        <taxon>Basidiomycota</taxon>
        <taxon>Agaricomycotina</taxon>
        <taxon>Tremellomycetes</taxon>
        <taxon>Tremellales</taxon>
        <taxon>Cryptococcaceae</taxon>
        <taxon>Cryptococcus</taxon>
        <taxon>Cryptococcus neoformans species complex</taxon>
    </lineage>
</organism>
<evidence type="ECO:0000250" key="1"/>
<evidence type="ECO:0000250" key="2">
    <source>
        <dbReference type="UniProtKB" id="P32485"/>
    </source>
</evidence>
<evidence type="ECO:0000250" key="3">
    <source>
        <dbReference type="UniProtKB" id="Q16539"/>
    </source>
</evidence>
<evidence type="ECO:0000255" key="4">
    <source>
        <dbReference type="PROSITE-ProRule" id="PRU00159"/>
    </source>
</evidence>
<evidence type="ECO:0000255" key="5">
    <source>
        <dbReference type="PROSITE-ProRule" id="PRU10027"/>
    </source>
</evidence>
<evidence type="ECO:0000269" key="6">
    <source>
    </source>
</evidence>
<evidence type="ECO:0000269" key="7">
    <source>
    </source>
</evidence>
<evidence type="ECO:0000269" key="8">
    <source>
    </source>
</evidence>
<name>HOG1_CRYNH</name>
<feature type="chain" id="PRO_0000289685" description="Mitogen-activated protein kinase HOG1">
    <location>
        <begin position="1"/>
        <end position="365"/>
    </location>
</feature>
<feature type="domain" description="Protein kinase" evidence="4">
    <location>
        <begin position="20"/>
        <end position="299"/>
    </location>
</feature>
<feature type="short sequence motif" description="TXY">
    <location>
        <begin position="171"/>
        <end position="173"/>
    </location>
</feature>
<feature type="active site" description="Proton acceptor" evidence="4 5">
    <location>
        <position position="141"/>
    </location>
</feature>
<feature type="binding site" evidence="4">
    <location>
        <begin position="26"/>
        <end position="34"/>
    </location>
    <ligand>
        <name>ATP</name>
        <dbReference type="ChEBI" id="CHEBI:30616"/>
    </ligand>
</feature>
<feature type="binding site" evidence="4">
    <location>
        <position position="49"/>
    </location>
    <ligand>
        <name>ATP</name>
        <dbReference type="ChEBI" id="CHEBI:30616"/>
    </ligand>
</feature>
<feature type="modified residue" description="Phosphothreonine" evidence="1">
    <location>
        <position position="171"/>
    </location>
</feature>
<feature type="modified residue" description="Phosphotyrosine" evidence="1">
    <location>
        <position position="173"/>
    </location>
</feature>
<feature type="mutagenesis site" description="Confers resistance to fludioxonil; when associated with N-50." evidence="7">
    <original>K</original>
    <variation>S</variation>
    <location>
        <position position="49"/>
    </location>
</feature>
<feature type="mutagenesis site" description="Confers resistance to fludioxonil; when associated with S-49." evidence="7">
    <original>K</original>
    <variation>N</variation>
    <location>
        <position position="50"/>
    </location>
</feature>
<feature type="mutagenesis site" description="Confers resistance to fludioxonil; when associated with A-173." evidence="7">
    <original>T</original>
    <variation>A</variation>
    <location>
        <position position="171"/>
    </location>
</feature>
<feature type="mutagenesis site" description="Confers resistance to fludioxonil; when associated with A-171." evidence="7">
    <original>Y</original>
    <variation>A</variation>
    <location>
        <position position="173"/>
    </location>
</feature>
<protein>
    <recommendedName>
        <fullName>Mitogen-activated protein kinase HOG1</fullName>
        <shortName>MAP kinase HOG1</shortName>
        <ecNumber evidence="2">2.7.11.24</ecNumber>
    </recommendedName>
</protein>
<proteinExistence type="evidence at protein level"/>
<keyword id="KW-0010">Activator</keyword>
<keyword id="KW-0067">ATP-binding</keyword>
<keyword id="KW-0963">Cytoplasm</keyword>
<keyword id="KW-0418">Kinase</keyword>
<keyword id="KW-0547">Nucleotide-binding</keyword>
<keyword id="KW-0539">Nucleus</keyword>
<keyword id="KW-0597">Phosphoprotein</keyword>
<keyword id="KW-0723">Serine/threonine-protein kinase</keyword>
<keyword id="KW-0804">Transcription</keyword>
<keyword id="KW-0805">Transcription regulation</keyword>
<keyword id="KW-0808">Transferase</keyword>
<accession>Q56R42</accession>
<accession>J9VTY4</accession>
<reference key="1">
    <citation type="journal article" date="2005" name="Mol. Biol. Cell">
        <title>Specialization of the HOG pathway and its impact on differentiation and virulence of Cryptococcus neoformans.</title>
        <authorList>
            <person name="Bahn Y.-S."/>
            <person name="Kojima K."/>
            <person name="Cox G.M."/>
            <person name="Heitman J."/>
        </authorList>
    </citation>
    <scope>NUCLEOTIDE SEQUENCE [GENOMIC DNA]</scope>
    <scope>FUNCTION</scope>
    <scope>PHOSPHORYLATION</scope>
    <scope>SUBCELLULAR LOCATION</scope>
    <source>
        <strain>H99 / ATCC 208821 / CBS 10515 / FGSC 9487</strain>
    </source>
</reference>
<reference key="2">
    <citation type="journal article" date="2014" name="PLoS Genet.">
        <title>Analysis of the genome and transcriptome of Cryptococcus neoformans var. grubii reveals complex RNA expression and microevolution leading to virulence attenuation.</title>
        <authorList>
            <person name="Janbon G."/>
            <person name="Ormerod K.L."/>
            <person name="Paulet D."/>
            <person name="Byrnes E.J. III"/>
            <person name="Yadav V."/>
            <person name="Chatterjee G."/>
            <person name="Mullapudi N."/>
            <person name="Hon C.-C."/>
            <person name="Billmyre R.B."/>
            <person name="Brunel F."/>
            <person name="Bahn Y.-S."/>
            <person name="Chen W."/>
            <person name="Chen Y."/>
            <person name="Chow E.W.L."/>
            <person name="Coppee J.-Y."/>
            <person name="Floyd-Averette A."/>
            <person name="Gaillardin C."/>
            <person name="Gerik K.J."/>
            <person name="Goldberg J."/>
            <person name="Gonzalez-Hilarion S."/>
            <person name="Gujja S."/>
            <person name="Hamlin J.L."/>
            <person name="Hsueh Y.-P."/>
            <person name="Ianiri G."/>
            <person name="Jones S."/>
            <person name="Kodira C.D."/>
            <person name="Kozubowski L."/>
            <person name="Lam W."/>
            <person name="Marra M."/>
            <person name="Mesner L.D."/>
            <person name="Mieczkowski P.A."/>
            <person name="Moyrand F."/>
            <person name="Nielsen K."/>
            <person name="Proux C."/>
            <person name="Rossignol T."/>
            <person name="Schein J.E."/>
            <person name="Sun S."/>
            <person name="Wollschlaeger C."/>
            <person name="Wood I.A."/>
            <person name="Zeng Q."/>
            <person name="Neuveglise C."/>
            <person name="Newlon C.S."/>
            <person name="Perfect J.R."/>
            <person name="Lodge J.K."/>
            <person name="Idnurm A."/>
            <person name="Stajich J.E."/>
            <person name="Kronstad J.W."/>
            <person name="Sanyal K."/>
            <person name="Heitman J."/>
            <person name="Fraser J.A."/>
            <person name="Cuomo C.A."/>
            <person name="Dietrich F.S."/>
        </authorList>
    </citation>
    <scope>NUCLEOTIDE SEQUENCE [LARGE SCALE GENOMIC DNA]</scope>
    <source>
        <strain>H99 / ATCC 208821 / CBS 10515 / FGSC 9487</strain>
    </source>
</reference>
<reference key="3">
    <citation type="journal article" date="2006" name="Microbiology">
        <title>Calcineurin, Mpk1 and Hog1 MAPK pathways independently control fludioxonil antifungal sensitivity in Cryptococcus neoformans.</title>
        <authorList>
            <person name="Kojima K."/>
            <person name="Bahn Y.-S."/>
            <person name="Heitman J."/>
        </authorList>
    </citation>
    <scope>FUNCTION</scope>
    <scope>PHOSPHORYLATION</scope>
    <scope>MUTAGENESIS OF LYS-49; LYS-50; THR-171 AND TYR-173</scope>
</reference>
<reference key="4">
    <citation type="journal article" date="2006" name="Mol. Biol. Cell">
        <title>A unique fungal two-component system regulates stress responses, drug sensitivity, sexual development, and virulence of Cryptococcus neoformans.</title>
        <authorList>
            <person name="Bahn Y.-S."/>
            <person name="Kojima K."/>
            <person name="Cox G.M."/>
            <person name="Heitman J."/>
        </authorList>
    </citation>
    <scope>FUNCTION</scope>
    <scope>PHOSPHORYLATION</scope>
</reference>
<sequence>MADFVKLSIFGTVFEVTTRYVDLQPVGMGAFGLVCSAKDQLSGTSVAIKKIMKPFSTPVLSKRTYRELKLLKHLRHENIISLSDIFISPLEDIYFVTELLGTDLHRLLTSRPLEKQFIQYFLYQILRGLKYVHSAGVVHRDLKPSNILVNENCDLKICDFGLARIQDPQMTGYVSTRYYRAPEIMLTWQKYDVAVDIWSTGCIFAEMLEGKPLFPGKDHVNQFSIITELLGTPPDDVIQTIASENTLRFVQSLPKREKVPFSTKFPNADPVSLDLLEKMLVFDPRTRISAAEGLAHEYLAPYHDPTDEPVAAEVFDWSFNDADLPVDTWKVMMYSEILDFHNLGDISQNEAEGPVTGEVPAAPAS</sequence>
<gene>
    <name type="primary">HOG1</name>
    <name type="ORF">CNAG_01523</name>
</gene>